<comment type="function">
    <text evidence="1">Involved in transcription antitermination. Required for transcription of ribosomal RNA (rRNA) genes. Binds specifically to the boxA antiterminator sequence of the ribosomal RNA (rrn) operons.</text>
</comment>
<comment type="similarity">
    <text evidence="1">Belongs to the NusB family.</text>
</comment>
<protein>
    <recommendedName>
        <fullName evidence="1">Transcription antitermination protein NusB</fullName>
    </recommendedName>
    <alternativeName>
        <fullName evidence="1">Antitermination factor NusB</fullName>
    </alternativeName>
</protein>
<gene>
    <name evidence="1" type="primary">nusB</name>
    <name type="ordered locus">Tery_0737</name>
</gene>
<proteinExistence type="inferred from homology"/>
<evidence type="ECO:0000255" key="1">
    <source>
        <dbReference type="HAMAP-Rule" id="MF_00073"/>
    </source>
</evidence>
<feature type="chain" id="PRO_0000265623" description="Transcription antitermination protein NusB">
    <location>
        <begin position="1"/>
        <end position="207"/>
    </location>
</feature>
<name>NUSB_TRIEI</name>
<dbReference type="EMBL" id="CP000393">
    <property type="protein sequence ID" value="ABG50168.1"/>
    <property type="molecule type" value="Genomic_DNA"/>
</dbReference>
<dbReference type="RefSeq" id="WP_011610561.1">
    <property type="nucleotide sequence ID" value="NC_008312.1"/>
</dbReference>
<dbReference type="SMR" id="Q118A6"/>
<dbReference type="STRING" id="203124.Tery_0737"/>
<dbReference type="KEGG" id="ter:Tery_0737"/>
<dbReference type="eggNOG" id="COG0781">
    <property type="taxonomic scope" value="Bacteria"/>
</dbReference>
<dbReference type="HOGENOM" id="CLU_087843_0_0_3"/>
<dbReference type="OrthoDB" id="3528057at2"/>
<dbReference type="GO" id="GO:0005829">
    <property type="term" value="C:cytosol"/>
    <property type="evidence" value="ECO:0007669"/>
    <property type="project" value="TreeGrafter"/>
</dbReference>
<dbReference type="GO" id="GO:0003723">
    <property type="term" value="F:RNA binding"/>
    <property type="evidence" value="ECO:0007669"/>
    <property type="project" value="UniProtKB-UniRule"/>
</dbReference>
<dbReference type="GO" id="GO:0006353">
    <property type="term" value="P:DNA-templated transcription termination"/>
    <property type="evidence" value="ECO:0007669"/>
    <property type="project" value="UniProtKB-UniRule"/>
</dbReference>
<dbReference type="GO" id="GO:0031564">
    <property type="term" value="P:transcription antitermination"/>
    <property type="evidence" value="ECO:0007669"/>
    <property type="project" value="UniProtKB-KW"/>
</dbReference>
<dbReference type="Gene3D" id="1.10.940.10">
    <property type="entry name" value="NusB-like"/>
    <property type="match status" value="1"/>
</dbReference>
<dbReference type="HAMAP" id="MF_00073">
    <property type="entry name" value="NusB"/>
    <property type="match status" value="1"/>
</dbReference>
<dbReference type="InterPro" id="IPR035926">
    <property type="entry name" value="NusB-like_sf"/>
</dbReference>
<dbReference type="InterPro" id="IPR011605">
    <property type="entry name" value="NusB_fam"/>
</dbReference>
<dbReference type="InterPro" id="IPR006027">
    <property type="entry name" value="NusB_RsmB_TIM44"/>
</dbReference>
<dbReference type="NCBIfam" id="TIGR01951">
    <property type="entry name" value="nusB"/>
    <property type="match status" value="1"/>
</dbReference>
<dbReference type="PANTHER" id="PTHR11078:SF3">
    <property type="entry name" value="ANTITERMINATION NUSB DOMAIN-CONTAINING PROTEIN"/>
    <property type="match status" value="1"/>
</dbReference>
<dbReference type="PANTHER" id="PTHR11078">
    <property type="entry name" value="N UTILIZATION SUBSTANCE PROTEIN B-RELATED"/>
    <property type="match status" value="1"/>
</dbReference>
<dbReference type="Pfam" id="PF01029">
    <property type="entry name" value="NusB"/>
    <property type="match status" value="1"/>
</dbReference>
<dbReference type="SUPFAM" id="SSF48013">
    <property type="entry name" value="NusB-like"/>
    <property type="match status" value="1"/>
</dbReference>
<organism>
    <name type="scientific">Trichodesmium erythraeum (strain IMS101)</name>
    <dbReference type="NCBI Taxonomy" id="203124"/>
    <lineage>
        <taxon>Bacteria</taxon>
        <taxon>Bacillati</taxon>
        <taxon>Cyanobacteriota</taxon>
        <taxon>Cyanophyceae</taxon>
        <taxon>Oscillatoriophycideae</taxon>
        <taxon>Oscillatoriales</taxon>
        <taxon>Microcoleaceae</taxon>
        <taxon>Trichodesmium</taxon>
    </lineage>
</organism>
<keyword id="KW-0694">RNA-binding</keyword>
<keyword id="KW-0804">Transcription</keyword>
<keyword id="KW-0889">Transcription antitermination</keyword>
<keyword id="KW-0805">Transcription regulation</keyword>
<sequence>MKKTPRSTARELALLALSQLPKKSGSLEKKQLQEVVLAAVRTLRIEAQDILETAAAELQRGSDRLLNSQIDTTDIESARVMLYEAIELGQTAINRIGTAVELPEMLQLTNQLEVRSYAMEVLTKVNGNRKEVDKLLQESIVDWQIERLPRIDLDILRIAVAEMMFIGIQKQVAISEAVELAKRYSGEDGYKFINGVLRRVFDKINVI</sequence>
<accession>Q118A6</accession>
<reference key="1">
    <citation type="journal article" date="2015" name="Proc. Natl. Acad. Sci. U.S.A.">
        <title>Trichodesmium genome maintains abundant, widespread noncoding DNA in situ, despite oligotrophic lifestyle.</title>
        <authorList>
            <person name="Walworth N."/>
            <person name="Pfreundt U."/>
            <person name="Nelson W.C."/>
            <person name="Mincer T."/>
            <person name="Heidelberg J.F."/>
            <person name="Fu F."/>
            <person name="Waterbury J.B."/>
            <person name="Glavina del Rio T."/>
            <person name="Goodwin L."/>
            <person name="Kyrpides N.C."/>
            <person name="Land M.L."/>
            <person name="Woyke T."/>
            <person name="Hutchins D.A."/>
            <person name="Hess W.R."/>
            <person name="Webb E.A."/>
        </authorList>
    </citation>
    <scope>NUCLEOTIDE SEQUENCE [LARGE SCALE GENOMIC DNA]</scope>
    <source>
        <strain>IMS101</strain>
    </source>
</reference>